<feature type="chain" id="PRO_0000084948" description="Catalase isozyme 3">
    <location>
        <begin position="1"/>
        <end position="496"/>
    </location>
</feature>
<feature type="region of interest" description="Disordered" evidence="3">
    <location>
        <begin position="1"/>
        <end position="25"/>
    </location>
</feature>
<feature type="region of interest" description="Disordered" evidence="3">
    <location>
        <begin position="402"/>
        <end position="422"/>
    </location>
</feature>
<feature type="compositionally biased region" description="Polar residues" evidence="3">
    <location>
        <begin position="9"/>
        <end position="23"/>
    </location>
</feature>
<feature type="active site" evidence="2">
    <location>
        <position position="67"/>
    </location>
</feature>
<feature type="active site" evidence="2">
    <location>
        <position position="140"/>
    </location>
</feature>
<feature type="binding site" description="axial binding residue" evidence="1">
    <location>
        <position position="351"/>
    </location>
    <ligand>
        <name>heme</name>
        <dbReference type="ChEBI" id="CHEBI:30413"/>
    </ligand>
    <ligandPart>
        <name>Fe</name>
        <dbReference type="ChEBI" id="CHEBI:18248"/>
    </ligandPart>
</feature>
<feature type="sequence conflict" description="In Ref. 2; AAA33441/CAA31057." evidence="4" ref="2">
    <original>A</original>
    <variation>D</variation>
    <location>
        <position position="57"/>
    </location>
</feature>
<feature type="sequence conflict" description="In Ref. 2; AAA33441/CAA31057." evidence="4" ref="2">
    <original>C</original>
    <variation>S</variation>
    <location>
        <position position="79"/>
    </location>
</feature>
<feature type="sequence conflict" description="In Ref. 2; AAA33441/CAA31057." evidence="4" ref="2">
    <original>T</original>
    <variation>Q</variation>
    <location>
        <position position="107"/>
    </location>
</feature>
<feature type="sequence conflict" description="In Ref. 2; AAA33441/CAA31057." evidence="4" ref="2">
    <original>HERGSPE</original>
    <variation>PEPGSGR</variation>
    <location>
        <begin position="110"/>
        <end position="116"/>
    </location>
</feature>
<feature type="sequence conflict" description="In Ref. 2; AAA33441/CAA31057." evidence="4" ref="2">
    <original>P</original>
    <variation>A</variation>
    <location>
        <position position="121"/>
    </location>
</feature>
<feature type="sequence conflict" description="In Ref. 2; AAA33441." evidence="4" ref="2">
    <original>D</original>
    <variation>H</variation>
    <location>
        <position position="194"/>
    </location>
</feature>
<feature type="sequence conflict" description="In Ref. 2; AAA33441/CAA31057." evidence="4" ref="2">
    <original>V</original>
    <variation>E</variation>
    <location>
        <position position="234"/>
    </location>
</feature>
<feature type="sequence conflict" description="In Ref. 2; AAA33441." evidence="4" ref="2">
    <original>C</original>
    <variation>S</variation>
    <location>
        <position position="236"/>
    </location>
</feature>
<feature type="sequence conflict" description="In Ref. 2; AAA33441/CAA31057." evidence="4" ref="2">
    <original>AL</original>
    <variation>R</variation>
    <location>
        <begin position="244"/>
        <end position="245"/>
    </location>
</feature>
<feature type="sequence conflict" description="In Ref. 2; AAA33441/CAA31057." evidence="4" ref="2">
    <location>
        <position position="254"/>
    </location>
</feature>
<feature type="sequence conflict" description="In Ref. 2; AAA33441/CAA31057." evidence="4" ref="2">
    <original>A</original>
    <variation>AE</variation>
    <location>
        <position position="264"/>
    </location>
</feature>
<feature type="sequence conflict" description="In Ref. 2; AAA33441/CAA31057." evidence="4" ref="2">
    <original>DT</original>
    <variation>AQ</variation>
    <location>
        <begin position="280"/>
        <end position="281"/>
    </location>
</feature>
<feature type="sequence conflict" description="In Ref. 2; AAA33441." evidence="4" ref="2">
    <original>E</original>
    <variation>Q</variation>
    <location>
        <position position="282"/>
    </location>
</feature>
<feature type="sequence conflict" description="In Ref. 2; AAA33441/CAA31057." evidence="4" ref="2">
    <original>F</original>
    <variation>L</variation>
    <location>
        <position position="319"/>
    </location>
</feature>
<feature type="sequence conflict" description="In Ref. 2; AAA33441/CAA31057." evidence="4" ref="2">
    <original>AH</original>
    <variation>GT</variation>
    <location>
        <begin position="374"/>
        <end position="375"/>
    </location>
</feature>
<feature type="sequence conflict" description="In Ref. 2; AAA33441/CAA31057." evidence="4" ref="2">
    <original>F</original>
    <variation>L</variation>
    <location>
        <position position="386"/>
    </location>
</feature>
<feature type="sequence conflict" description="In Ref. 2; AAA33441/CAA31057." evidence="4" ref="2">
    <original>PLRQAAP</original>
    <variation>RRCGRAA</variation>
    <location>
        <begin position="402"/>
        <end position="408"/>
    </location>
</feature>
<feature type="sequence conflict" description="In Ref. 2; AAA33441/CAA31057." evidence="4" ref="2">
    <original>RRFADSLGH</original>
    <variation>KAIRRLART</variation>
    <location>
        <begin position="452"/>
        <end position="460"/>
    </location>
</feature>
<feature type="sequence conflict" description="In Ref. 2; CAA31057." evidence="4" ref="2">
    <original>V</original>
    <variation>G</variation>
    <location>
        <position position="463"/>
    </location>
</feature>
<feature type="sequence conflict" description="In Ref. 2; AAA33441." evidence="4" ref="2">
    <original>V</original>
    <variation>R</variation>
    <location>
        <position position="463"/>
    </location>
</feature>
<feature type="sequence conflict" description="In Ref. 2; AAA33441/CAA31057." evidence="4" ref="2">
    <original>C</original>
    <variation>V</variation>
    <location>
        <position position="478"/>
    </location>
</feature>
<sequence length="496" mass="56796">MTMDPTKFRPSSSHDTTVTTTNAGAPVWNDNEALTVGPRGPILLEDYHLIEKVAHFARERIPERVVHARGASAKGFFECTHDVTSLTCADFLRAPGVRTPVIVRFSTVIHERGSPETIRDPRGFAVKFYTREGNWDLLGNNFPVFFIRDGIKFPDVIHAFKPNPRSHVQEYWRVFDFLSHLPESLHTFFFLFDDVGVPSDYRHMEGFGVNTYTFVSAAGKAQYVKFHWKPTCGVRCILTDEEAALVGGRNHSHATQDLYDSIAAGSFPEWTLYVQVMDPDTEEQYDFDPLDDTKTWPEDLLPLRPVGRLVLDRNVDNFFNENEQLAFGPGLVVPGIYYSDDKMLQCRVFAYADTQRYRLGPNYLMLPVNAPRCAHHNNHYDGAMNFMHRDEEVDYYPSRHAPLRQAAPPTPLPPRPVAGRREKATIRKPNDFKQPGERYRSWDADRQDRFVRRFADSLGHPKVSQELRSIWIDLLAKCDASLGMKIATRLNMKANM</sequence>
<proteinExistence type="evidence at transcript level"/>
<dbReference type="EC" id="1.11.1.6"/>
<dbReference type="EMBL" id="L05934">
    <property type="protein sequence ID" value="AAC37357.1"/>
    <property type="molecule type" value="Genomic_DNA"/>
</dbReference>
<dbReference type="EMBL" id="M33103">
    <property type="protein sequence ID" value="AAA33441.1"/>
    <property type="molecule type" value="mRNA"/>
</dbReference>
<dbReference type="EMBL" id="X12539">
    <property type="protein sequence ID" value="CAA31057.1"/>
    <property type="molecule type" value="mRNA"/>
</dbReference>
<dbReference type="PIR" id="S37379">
    <property type="entry name" value="S37379"/>
</dbReference>
<dbReference type="RefSeq" id="NP_001105416.1">
    <property type="nucleotide sequence ID" value="NM_001111946.1"/>
</dbReference>
<dbReference type="SMR" id="P18123"/>
<dbReference type="FunCoup" id="P18123">
    <property type="interactions" value="2092"/>
</dbReference>
<dbReference type="STRING" id="4577.P18123"/>
<dbReference type="PeroxiBase" id="6439">
    <property type="entry name" value="ZmKat3"/>
</dbReference>
<dbReference type="PaxDb" id="4577-GRMZM2G079348_P01"/>
<dbReference type="MaizeGDB" id="13855"/>
<dbReference type="eggNOG" id="KOG0047">
    <property type="taxonomic scope" value="Eukaryota"/>
</dbReference>
<dbReference type="InParanoid" id="P18123"/>
<dbReference type="Proteomes" id="UP000007305">
    <property type="component" value="Unplaced"/>
</dbReference>
<dbReference type="ExpressionAtlas" id="P18123">
    <property type="expression patterns" value="baseline and differential"/>
</dbReference>
<dbReference type="GO" id="GO:0005737">
    <property type="term" value="C:cytoplasm"/>
    <property type="evidence" value="ECO:0000318"/>
    <property type="project" value="GO_Central"/>
</dbReference>
<dbReference type="GO" id="GO:0005739">
    <property type="term" value="C:mitochondrion"/>
    <property type="evidence" value="ECO:0000314"/>
    <property type="project" value="AgBase"/>
</dbReference>
<dbReference type="GO" id="GO:0005777">
    <property type="term" value="C:peroxisome"/>
    <property type="evidence" value="ECO:0000318"/>
    <property type="project" value="GO_Central"/>
</dbReference>
<dbReference type="GO" id="GO:0005886">
    <property type="term" value="C:plasma membrane"/>
    <property type="evidence" value="ECO:0000318"/>
    <property type="project" value="GO_Central"/>
</dbReference>
<dbReference type="GO" id="GO:0004096">
    <property type="term" value="F:catalase activity"/>
    <property type="evidence" value="ECO:0000314"/>
    <property type="project" value="AgBase"/>
</dbReference>
<dbReference type="GO" id="GO:0020037">
    <property type="term" value="F:heme binding"/>
    <property type="evidence" value="ECO:0000318"/>
    <property type="project" value="GO_Central"/>
</dbReference>
<dbReference type="GO" id="GO:0046872">
    <property type="term" value="F:metal ion binding"/>
    <property type="evidence" value="ECO:0007669"/>
    <property type="project" value="UniProtKB-KW"/>
</dbReference>
<dbReference type="GO" id="GO:0007623">
    <property type="term" value="P:circadian rhythm"/>
    <property type="evidence" value="ECO:0000304"/>
    <property type="project" value="AgBase"/>
</dbReference>
<dbReference type="GO" id="GO:0009631">
    <property type="term" value="P:cold acclimation"/>
    <property type="evidence" value="ECO:0000315"/>
    <property type="project" value="AgBase"/>
</dbReference>
<dbReference type="GO" id="GO:0042744">
    <property type="term" value="P:hydrogen peroxide catabolic process"/>
    <property type="evidence" value="ECO:0000318"/>
    <property type="project" value="GO_Central"/>
</dbReference>
<dbReference type="GO" id="GO:0009733">
    <property type="term" value="P:response to auxin"/>
    <property type="evidence" value="ECO:0000270"/>
    <property type="project" value="AgBase"/>
</dbReference>
<dbReference type="GO" id="GO:0042542">
    <property type="term" value="P:response to hydrogen peroxide"/>
    <property type="evidence" value="ECO:0000318"/>
    <property type="project" value="GO_Central"/>
</dbReference>
<dbReference type="GO" id="GO:0006979">
    <property type="term" value="P:response to oxidative stress"/>
    <property type="evidence" value="ECO:0000314"/>
    <property type="project" value="AgBase"/>
</dbReference>
<dbReference type="GO" id="GO:0000302">
    <property type="term" value="P:response to reactive oxygen species"/>
    <property type="evidence" value="ECO:0000270"/>
    <property type="project" value="AgBase"/>
</dbReference>
<dbReference type="GO" id="GO:0009410">
    <property type="term" value="P:response to xenobiotic stimulus"/>
    <property type="evidence" value="ECO:0000270"/>
    <property type="project" value="AgBase"/>
</dbReference>
<dbReference type="CDD" id="cd08154">
    <property type="entry name" value="catalase_clade_1"/>
    <property type="match status" value="1"/>
</dbReference>
<dbReference type="FunFam" id="2.40.180.10:FF:000002">
    <property type="entry name" value="Catalase"/>
    <property type="match status" value="1"/>
</dbReference>
<dbReference type="Gene3D" id="2.40.180.10">
    <property type="entry name" value="Catalase core domain"/>
    <property type="match status" value="1"/>
</dbReference>
<dbReference type="InterPro" id="IPR018028">
    <property type="entry name" value="Catalase"/>
</dbReference>
<dbReference type="InterPro" id="IPR024708">
    <property type="entry name" value="Catalase_AS"/>
</dbReference>
<dbReference type="InterPro" id="IPR024711">
    <property type="entry name" value="Catalase_clade1/3"/>
</dbReference>
<dbReference type="InterPro" id="IPR011614">
    <property type="entry name" value="Catalase_core"/>
</dbReference>
<dbReference type="InterPro" id="IPR002226">
    <property type="entry name" value="Catalase_haem_BS"/>
</dbReference>
<dbReference type="InterPro" id="IPR010582">
    <property type="entry name" value="Catalase_immune_responsive"/>
</dbReference>
<dbReference type="InterPro" id="IPR020835">
    <property type="entry name" value="Catalase_sf"/>
</dbReference>
<dbReference type="PANTHER" id="PTHR11465">
    <property type="entry name" value="CATALASE"/>
    <property type="match status" value="1"/>
</dbReference>
<dbReference type="PANTHER" id="PTHR11465:SF45">
    <property type="entry name" value="CATALASE ISOZYME A"/>
    <property type="match status" value="1"/>
</dbReference>
<dbReference type="Pfam" id="PF00199">
    <property type="entry name" value="Catalase"/>
    <property type="match status" value="1"/>
</dbReference>
<dbReference type="Pfam" id="PF06628">
    <property type="entry name" value="Catalase-rel"/>
    <property type="match status" value="1"/>
</dbReference>
<dbReference type="PIRSF" id="PIRSF038928">
    <property type="entry name" value="Catalase_clade1-3"/>
    <property type="match status" value="1"/>
</dbReference>
<dbReference type="PRINTS" id="PR00067">
    <property type="entry name" value="CATALASE"/>
</dbReference>
<dbReference type="SMART" id="SM01060">
    <property type="entry name" value="Catalase"/>
    <property type="match status" value="1"/>
</dbReference>
<dbReference type="SUPFAM" id="SSF56634">
    <property type="entry name" value="Heme-dependent catalase-like"/>
    <property type="match status" value="1"/>
</dbReference>
<dbReference type="PROSITE" id="PS00437">
    <property type="entry name" value="CATALASE_1"/>
    <property type="match status" value="1"/>
</dbReference>
<dbReference type="PROSITE" id="PS00438">
    <property type="entry name" value="CATALASE_2"/>
    <property type="match status" value="1"/>
</dbReference>
<dbReference type="PROSITE" id="PS51402">
    <property type="entry name" value="CATALASE_3"/>
    <property type="match status" value="1"/>
</dbReference>
<gene>
    <name type="primary">CAT3</name>
</gene>
<comment type="function">
    <text>Occurs in almost all aerobically respiring organisms and serves to protect cells from the toxic effects of hydrogen peroxide. Its levels are highest in the light period and are lowest in the dark period, hence it may be important for scavenging hydrogen peroxide at night, rather than during the day.</text>
</comment>
<comment type="catalytic activity">
    <reaction evidence="2">
        <text>2 H2O2 = O2 + 2 H2O</text>
        <dbReference type="Rhea" id="RHEA:20309"/>
        <dbReference type="ChEBI" id="CHEBI:15377"/>
        <dbReference type="ChEBI" id="CHEBI:15379"/>
        <dbReference type="ChEBI" id="CHEBI:16240"/>
        <dbReference type="EC" id="1.11.1.6"/>
    </reaction>
</comment>
<comment type="cofactor">
    <cofactor>
        <name>heme</name>
        <dbReference type="ChEBI" id="CHEBI:30413"/>
    </cofactor>
</comment>
<comment type="subunit">
    <text>Homotetramer.</text>
</comment>
<comment type="subcellular location">
    <subcellularLocation>
        <location>Mitochondrion</location>
    </subcellularLocation>
</comment>
<comment type="tissue specificity">
    <text>Leaf mesophyll cells, pericarp, seedling roots and the coleoptile.</text>
</comment>
<comment type="similarity">
    <text evidence="4">Belongs to the catalase family.</text>
</comment>
<protein>
    <recommendedName>
        <fullName>Catalase isozyme 3</fullName>
        <ecNumber>1.11.1.6</ecNumber>
    </recommendedName>
</protein>
<evidence type="ECO:0000250" key="1"/>
<evidence type="ECO:0000255" key="2">
    <source>
        <dbReference type="PROSITE-ProRule" id="PRU10013"/>
    </source>
</evidence>
<evidence type="ECO:0000256" key="3">
    <source>
        <dbReference type="SAM" id="MobiDB-lite"/>
    </source>
</evidence>
<evidence type="ECO:0000305" key="4"/>
<name>CATA3_MAIZE</name>
<keyword id="KW-0349">Heme</keyword>
<keyword id="KW-0376">Hydrogen peroxide</keyword>
<keyword id="KW-0408">Iron</keyword>
<keyword id="KW-0479">Metal-binding</keyword>
<keyword id="KW-0496">Mitochondrion</keyword>
<keyword id="KW-0560">Oxidoreductase</keyword>
<keyword id="KW-0575">Peroxidase</keyword>
<keyword id="KW-1185">Reference proteome</keyword>
<organism>
    <name type="scientific">Zea mays</name>
    <name type="common">Maize</name>
    <dbReference type="NCBI Taxonomy" id="4577"/>
    <lineage>
        <taxon>Eukaryota</taxon>
        <taxon>Viridiplantae</taxon>
        <taxon>Streptophyta</taxon>
        <taxon>Embryophyta</taxon>
        <taxon>Tracheophyta</taxon>
        <taxon>Spermatophyta</taxon>
        <taxon>Magnoliopsida</taxon>
        <taxon>Liliopsida</taxon>
        <taxon>Poales</taxon>
        <taxon>Poaceae</taxon>
        <taxon>PACMAD clade</taxon>
        <taxon>Panicoideae</taxon>
        <taxon>Andropogonodae</taxon>
        <taxon>Andropogoneae</taxon>
        <taxon>Tripsacinae</taxon>
        <taxon>Zea</taxon>
    </lineage>
</organism>
<accession>P18123</accession>
<reference key="1">
    <citation type="journal article" date="1993" name="Plant Mol. Biol.">
        <title>Isolation and characterization of a genomic sequence encoding the maize Cat3 catalase gene.</title>
        <authorList>
            <person name="Abler M.L."/>
            <person name="Scandalios J.G."/>
        </authorList>
    </citation>
    <scope>NUCLEOTIDE SEQUENCE [GENOMIC DNA]</scope>
    <source>
        <strain>cv. Wisconsin 64A</strain>
        <tissue>Seedling leaf</tissue>
    </source>
</reference>
<reference key="2">
    <citation type="journal article" date="1988" name="Biochim. Biophys. Acta">
        <title>Characterization of catalase transcripts and their differential expression in maize.</title>
        <authorList>
            <person name="Redinbaugh M.G."/>
            <person name="Wadsworth G.J."/>
            <person name="Scandalios J.G."/>
        </authorList>
    </citation>
    <scope>NUCLEOTIDE SEQUENCE [MRNA]</scope>
    <source>
        <strain>cv. Wisconsin 64A</strain>
        <tissue>Epicotyl</tissue>
    </source>
</reference>